<organism>
    <name type="scientific">Tsukamurella paurometabola (strain ATCC 8368 / DSM 20162 / CCUG 35730 / CIP 100753 / JCM 10117 / KCTC 9821 / NBRC 16120 / NCIMB 702349 / NCTC 13040)</name>
    <name type="common">Corynebacterium paurometabolum</name>
    <dbReference type="NCBI Taxonomy" id="521096"/>
    <lineage>
        <taxon>Bacteria</taxon>
        <taxon>Bacillati</taxon>
        <taxon>Actinomycetota</taxon>
        <taxon>Actinomycetes</taxon>
        <taxon>Mycobacteriales</taxon>
        <taxon>Tsukamurellaceae</taxon>
        <taxon>Tsukamurella</taxon>
    </lineage>
</organism>
<gene>
    <name type="ordered locus">Tpau_2998</name>
</gene>
<sequence length="67" mass="7293">MQPVESSAIEAAGYDPAEQILALRFTGGATYLYYEVPPEVFDDLLAAESTGRFVNGIVKPRFRAVAL</sequence>
<dbReference type="EMBL" id="CP001966">
    <property type="protein sequence ID" value="ADG79593.1"/>
    <property type="molecule type" value="Genomic_DNA"/>
</dbReference>
<dbReference type="SMR" id="D5UU90"/>
<dbReference type="STRING" id="521096.Tpau_2998"/>
<dbReference type="KEGG" id="tpr:Tpau_2998"/>
<dbReference type="eggNOG" id="COG4249">
    <property type="taxonomic scope" value="Bacteria"/>
</dbReference>
<dbReference type="HOGENOM" id="CLU_174765_1_1_11"/>
<dbReference type="Proteomes" id="UP000001213">
    <property type="component" value="Chromosome"/>
</dbReference>
<dbReference type="InterPro" id="IPR025309">
    <property type="entry name" value="KTSC_dom"/>
</dbReference>
<dbReference type="Pfam" id="PF13619">
    <property type="entry name" value="KTSC"/>
    <property type="match status" value="1"/>
</dbReference>
<protein>
    <recommendedName>
        <fullName>Protein Tpau_2998</fullName>
    </recommendedName>
</protein>
<reference key="1">
    <citation type="journal article" date="2011" name="Stand. Genomic Sci.">
        <title>Complete genome sequence of Tsukamurella paurometabola type strain (no. 33).</title>
        <authorList>
            <person name="Munk A.C."/>
            <person name="Lapidus A."/>
            <person name="Lucas S."/>
            <person name="Nolan M."/>
            <person name="Tice H."/>
            <person name="Cheng J.F."/>
            <person name="Del Rio T.G."/>
            <person name="Goodwin L."/>
            <person name="Pitluck S."/>
            <person name="Liolios K."/>
            <person name="Huntemann M."/>
            <person name="Ivanova N."/>
            <person name="Mavromatis K."/>
            <person name="Mikhailova N."/>
            <person name="Pati A."/>
            <person name="Chen A."/>
            <person name="Palaniappan K."/>
            <person name="Tapia R."/>
            <person name="Han C."/>
            <person name="Land M."/>
            <person name="Hauser L."/>
            <person name="Chang Y.J."/>
            <person name="Jeffries C.D."/>
            <person name="Brettin T."/>
            <person name="Yasawong M."/>
            <person name="Brambilla E.M."/>
            <person name="Rohde M."/>
            <person name="Sikorski J."/>
            <person name="Goeker M."/>
            <person name="Detter J.C."/>
            <person name="Woyke T."/>
            <person name="Bristow J."/>
            <person name="Eisen J.A."/>
            <person name="Markowitz V."/>
            <person name="Hugenholtz P."/>
            <person name="Kyrpides N.C."/>
            <person name="Klenk H.P."/>
        </authorList>
    </citation>
    <scope>NUCLEOTIDE SEQUENCE [LARGE SCALE GENOMIC DNA]</scope>
    <source>
        <strain>ATCC 8368 / DSM 20162 / CCUG 35730 / CIP 100753 / JCM 10117 / KCTC 9821 / NBRC 16120 / NCIMB 702349 / NCTC 13040</strain>
    </source>
</reference>
<proteinExistence type="predicted"/>
<feature type="chain" id="PRO_0000404096" description="Protein Tpau_2998">
    <location>
        <begin position="1"/>
        <end position="67"/>
    </location>
</feature>
<keyword id="KW-1185">Reference proteome</keyword>
<name>Y2998_TSUPD</name>
<accession>D5UU90</accession>